<name>PGLY_STRCO</name>
<gene>
    <name evidence="7" type="primary">pglY</name>
    <name evidence="11" type="ordered locus">SCO6635</name>
</gene>
<comment type="function">
    <text evidence="2 4 5 9 10">BREX systems (bacteriophage exclusion) provide immunity against bacteriophage. Part of a type 2 BREX system (Probable). Previously called the phage growth limitation (Pgl) system, it confers protection against bacteriophage phiC31. The bacteria allows one cycle of phage infection, but subsequent cycles are impaired, protecting the original bacterial colony (Probable) (PubMed:7642495). The system undergoes high rates (10(-3) to 10(-4)) of phase reversion, i.e. loss and regain of phiC31 resistance (PubMed:8446035). When the pglW-pglX-pglY-pglZ genes are transformed into a susceptible S.lividans (strain 1326) they confer resistance to infection by phage phiC31 and phiBT1; all 4 genes are necessary (PubMed:11972785).</text>
</comment>
<comment type="function">
    <text evidence="3">Hydrolyzes ATP but not AMP, ADP, GMP, GDP or GTP; activity is inhibited by the non-hydrolyzable ATP analog 5-adenylyl beta,gamma-imidodiphosphate.</text>
</comment>
<comment type="induction">
    <text evidence="4">Constitutively expressed, not induced by bacteriophage phiC31, probably part of a pglY-pglZ operon.</text>
</comment>
<comment type="disruption phenotype">
    <text evidence="4">Strain is no longer resistant to plaque formation by bacteriophage phiC31 (a Pgl- phenotype).</text>
</comment>
<evidence type="ECO:0000256" key="1">
    <source>
        <dbReference type="SAM" id="MobiDB-lite"/>
    </source>
</evidence>
<evidence type="ECO:0000269" key="2">
    <source>
    </source>
</evidence>
<evidence type="ECO:0000269" key="3">
    <source>
    </source>
</evidence>
<evidence type="ECO:0000269" key="4">
    <source>
    </source>
</evidence>
<evidence type="ECO:0000269" key="5">
    <source>
    </source>
</evidence>
<evidence type="ECO:0000303" key="6">
    <source>
    </source>
</evidence>
<evidence type="ECO:0000303" key="7">
    <source>
    </source>
</evidence>
<evidence type="ECO:0000305" key="8"/>
<evidence type="ECO:0000305" key="9">
    <source>
    </source>
</evidence>
<evidence type="ECO:0000305" key="10">
    <source>
    </source>
</evidence>
<evidence type="ECO:0000312" key="11">
    <source>
        <dbReference type="EMBL" id="CAA20546.1"/>
    </source>
</evidence>
<reference key="1">
    <citation type="journal article" date="1995" name="J. Bacteriol.">
        <title>Two genes involved in the phase-variable phi C31 resistance mechanism of Streptomyces coelicolor A3(2).</title>
        <authorList>
            <person name="Bedford D.J."/>
            <person name="Laity C."/>
            <person name="Buttner M.J."/>
        </authorList>
    </citation>
    <scope>NUCLEOTIDE SEQUENCE [GENOMIC DNA]</scope>
    <scope>FUNCTION IN ANTIVIRAL DEFENSE</scope>
    <scope>INDUCTION</scope>
    <scope>DISRUPTION PHENOTYPE</scope>
    <source>
        <strain>ATCC BAA-471 / A3(2) / M145</strain>
    </source>
</reference>
<reference key="2">
    <citation type="journal article" date="2002" name="Nature">
        <title>Complete genome sequence of the model actinomycete Streptomyces coelicolor A3(2).</title>
        <authorList>
            <person name="Bentley S.D."/>
            <person name="Chater K.F."/>
            <person name="Cerdeno-Tarraga A.-M."/>
            <person name="Challis G.L."/>
            <person name="Thomson N.R."/>
            <person name="James K.D."/>
            <person name="Harris D.E."/>
            <person name="Quail M.A."/>
            <person name="Kieser H."/>
            <person name="Harper D."/>
            <person name="Bateman A."/>
            <person name="Brown S."/>
            <person name="Chandra G."/>
            <person name="Chen C.W."/>
            <person name="Collins M."/>
            <person name="Cronin A."/>
            <person name="Fraser A."/>
            <person name="Goble A."/>
            <person name="Hidalgo J."/>
            <person name="Hornsby T."/>
            <person name="Howarth S."/>
            <person name="Huang C.-H."/>
            <person name="Kieser T."/>
            <person name="Larke L."/>
            <person name="Murphy L.D."/>
            <person name="Oliver K."/>
            <person name="O'Neil S."/>
            <person name="Rabbinowitsch E."/>
            <person name="Rajandream M.A."/>
            <person name="Rutherford K.M."/>
            <person name="Rutter S."/>
            <person name="Seeger K."/>
            <person name="Saunders D."/>
            <person name="Sharp S."/>
            <person name="Squares R."/>
            <person name="Squares S."/>
            <person name="Taylor K."/>
            <person name="Warren T."/>
            <person name="Wietzorrek A."/>
            <person name="Woodward J.R."/>
            <person name="Barrell B.G."/>
            <person name="Parkhill J."/>
            <person name="Hopwood D.A."/>
        </authorList>
    </citation>
    <scope>NUCLEOTIDE SEQUENCE [LARGE SCALE GENOMIC DNA]</scope>
    <source>
        <strain>ATCC BAA-471 / A3(2) / M145</strain>
    </source>
</reference>
<reference key="3">
    <citation type="journal article" date="1993" name="Mol. Microbiol.">
        <title>Genetic analysis of the phi C31-specific phage growth limitation (Pgl) system of Streptomyces coelicolor A3(2).</title>
        <authorList>
            <person name="Laity C."/>
            <person name="Chater K.F."/>
            <person name="Lewis C.G."/>
            <person name="Buttner M.J."/>
        </authorList>
    </citation>
    <scope>GENETIC ANALYSIS</scope>
    <scope>PHASE REVERSION</scope>
    <source>
        <strain>ATCC BAA-471 / A3(2) / M145</strain>
    </source>
</reference>
<reference key="4">
    <citation type="journal article" date="2002" name="Mol. Microbiol.">
        <title>Genetics of the phage growth limitation (Pgl) system of Streptomyces coelicolor A3(2).</title>
        <authorList>
            <person name="Sumby P."/>
            <person name="Smith M.C."/>
        </authorList>
    </citation>
    <scope>FUNCTION IN ANTIVIRAL DEFENSE</scope>
    <scope>DISRUPTION PHENOTYPE</scope>
</reference>
<reference key="5">
    <citation type="journal article" date="2015" name="EMBO J.">
        <title>BREX is a novel phage resistance system widespread in microbial genomes.</title>
        <authorList>
            <person name="Goldfarb T."/>
            <person name="Sberro H."/>
            <person name="Weinstock E."/>
            <person name="Cohen O."/>
            <person name="Doron S."/>
            <person name="Charpak-Amikam Y."/>
            <person name="Afik S."/>
            <person name="Ofir G."/>
            <person name="Sorek R."/>
        </authorList>
    </citation>
    <scope>CLASSIFICATION AND NOMENCLATURE</scope>
</reference>
<reference key="6">
    <citation type="journal article" date="2015" name="Virology">
        <title>The phage growth limitation system in Streptomyces coelicolor A(3)2 is a toxin/antitoxin system, comprising enzymes with DNA methyltransferase, protein kinase and ATPase activity.</title>
        <authorList>
            <person name="Hoskisson P.A."/>
            <person name="Sumby P."/>
            <person name="Smith M.C.M."/>
        </authorList>
    </citation>
    <scope>FUNCTION AS AN ATPASE</scope>
    <scope>MUTAGENESIS OF 81-LYS-SER-82</scope>
    <source>
        <strain>ATCC BAA-471 / A3(2) / M145</strain>
    </source>
</reference>
<accession>O86682</accession>
<accession>Q53942</accession>
<proteinExistence type="evidence at protein level"/>
<sequence length="1294" mass="141188">MAQPPLLRDVIDIKESISTSDFVLSLAEATTPAGAQHALRDYVVTERLLENFDEALALIKSSLDGHRSKAAYLHGSFGSGKSHFMAVLYALLSGDQAARARTEFDPVLTKHQWLSTDGKKFLLVPYHMLGAKALEQRVLGGYVTHVKKLCPEAPTPQVYRTDSLFADIRAMRANMGDEAVIRALGTSGADDAEEDEWGEGFAWTPQLLDTALAAEESHEAGVHLNLTNPSTPAELRAKLVNDAGTNLLPGFTQNAAEDEHGFISLDAGLSVIAEHAKSLGYDGLILFMDELILWLATLIHDQKFVAREASKITNFVEGGDARRAIPVMSFIARQRDLRELVGEEVSGAAESSIQDTLNLASGRFDKITLEDRKLPQIAHARLLKPKDAEAAQQVDAAFEQTKRVGPQVWDTLLGSEKGTTGADAESFRLTYPFSPAFMDTLVHISSALQRSRTGLKLMGQLLADHRDELRLGQLVPVGDLYPVIAQGGDKPFTDSLKVVFEAADKLYKTKLRPYLLSSYDITEDDVEQYRNRPESLTDPKKLNGCRMFTGDNRLVCTLLLSALAPSVPALSELTIRRLGALNHGSVLAPIPGAEVGIIKNKVAEWAARFPEIKETGTDANPGVRLELSGVDVDSVIANAQVNDNPGNRVALARRLLSEELGVEHGQLSDQLGFTWRGTARTAEIVFGNVADEDELPDHDLMPQEEGRWRIAIDLPFDEGEWGPVEDVNRVQRLRERQQGERSRTIAWLPAHLSATRFADFRRLVVIDKALADEHRFDTQYAGHLNADNRSRAKGLLETQREALLKQAKGAFKQAYGLAQKQAADVVPDFDDHLVALPDVDGLTLSFGQSLHDGIRHVAGKLLTHQYPAHPDLDPDATGTAVKPADTKKVFAHVRAAAEARDGRIEVPAADRKLMQRIAGPLRLGQQKEAYFELSRYWGDHFRQLARSQGVTGDLSLITLTDWTDRPDPRGLPDFLARLVVAAFAEMDDRVWVRGGTVLDPAPELAAIKDHDALRSQPLPAESDWDTARQRFETVFGAKPPALRRGRMVNQFARQIIEAARDYRDHAADLVHQLEAHASFLGLDQTADTGRLALARRSLQLLDALTAEAGKGAAGAKKTVEALASFDLGETSADRYGTSIKKARAVAEAVASAPWSTLELAAGLGPEGEALLDSLRNVARDDQRTADLRDALARTQREVVALIKRTQAAATPPPAPAASQPTAGDLSLDTPTSDPRIPYTSQETPTSSGGAGTARTSGGRRTTAARAVTDLQAELSDLAVRHPEATIEITWRVVE</sequence>
<protein>
    <recommendedName>
        <fullName evidence="6">ATPase PglY</fullName>
    </recommendedName>
    <alternativeName>
        <fullName>Bacteriophage (PhiC31) resistance gene PglY</fullName>
    </alternativeName>
    <alternativeName>
        <fullName evidence="7">ORF1</fullName>
    </alternativeName>
</protein>
<feature type="chain" id="PRO_0000452161" description="ATPase PglY">
    <location>
        <begin position="1"/>
        <end position="1294"/>
    </location>
</feature>
<feature type="region of interest" description="Disordered" evidence="1">
    <location>
        <begin position="1205"/>
        <end position="1263"/>
    </location>
</feature>
<feature type="compositionally biased region" description="Polar residues" evidence="1">
    <location>
        <begin position="1228"/>
        <end position="1244"/>
    </location>
</feature>
<feature type="compositionally biased region" description="Low complexity" evidence="1">
    <location>
        <begin position="1252"/>
        <end position="1263"/>
    </location>
</feature>
<feature type="mutagenesis site" description="Does not restore phage resistance to a deletion mutant, much less ATPase activity." evidence="3">
    <original>KS</original>
    <variation>AA</variation>
    <location>
        <begin position="81"/>
        <end position="82"/>
    </location>
</feature>
<feature type="sequence conflict" description="In Ref. 1; AAB00365." evidence="8" ref="1">
    <original>K</original>
    <variation>N</variation>
    <location>
        <position position="373"/>
    </location>
</feature>
<feature type="sequence conflict" description="In Ref. 1; AAB00365." evidence="8" ref="1">
    <original>M</original>
    <variation>I</variation>
    <location>
        <position position="914"/>
    </location>
</feature>
<feature type="sequence conflict" description="In Ref. 1; AAB00365." evidence="8" ref="1">
    <original>E</original>
    <variation>A</variation>
    <location>
        <position position="1003"/>
    </location>
</feature>
<keyword id="KW-0051">Antiviral defense</keyword>
<keyword id="KW-1185">Reference proteome</keyword>
<organism>
    <name type="scientific">Streptomyces coelicolor (strain ATCC BAA-471 / A3(2) / M145)</name>
    <dbReference type="NCBI Taxonomy" id="100226"/>
    <lineage>
        <taxon>Bacteria</taxon>
        <taxon>Bacillati</taxon>
        <taxon>Actinomycetota</taxon>
        <taxon>Actinomycetes</taxon>
        <taxon>Kitasatosporales</taxon>
        <taxon>Streptomycetaceae</taxon>
        <taxon>Streptomyces</taxon>
        <taxon>Streptomyces albidoflavus group</taxon>
    </lineage>
</organism>
<dbReference type="EMBL" id="L37531">
    <property type="protein sequence ID" value="AAB00365.1"/>
    <property type="molecule type" value="Genomic_DNA"/>
</dbReference>
<dbReference type="EMBL" id="AL939128">
    <property type="protein sequence ID" value="CAA20546.1"/>
    <property type="molecule type" value="Genomic_DNA"/>
</dbReference>
<dbReference type="PIR" id="T35044">
    <property type="entry name" value="T35044"/>
</dbReference>
<dbReference type="RefSeq" id="NP_630711.1">
    <property type="nucleotide sequence ID" value="NC_003888.3"/>
</dbReference>
<dbReference type="STRING" id="100226.gene:17764293"/>
<dbReference type="PaxDb" id="100226-SCO6635"/>
<dbReference type="KEGG" id="sco:SCO6635"/>
<dbReference type="PATRIC" id="fig|100226.15.peg.6740"/>
<dbReference type="eggNOG" id="COG1483">
    <property type="taxonomic scope" value="Bacteria"/>
</dbReference>
<dbReference type="HOGENOM" id="CLU_269246_0_0_11"/>
<dbReference type="InParanoid" id="O86682"/>
<dbReference type="OrthoDB" id="3201900at2"/>
<dbReference type="Proteomes" id="UP000001973">
    <property type="component" value="Chromosome"/>
</dbReference>
<dbReference type="GO" id="GO:0051607">
    <property type="term" value="P:defense response to virus"/>
    <property type="evidence" value="ECO:0007669"/>
    <property type="project" value="UniProtKB-KW"/>
</dbReference>